<gene>
    <name evidence="2" type="primary">rpsL</name>
    <name type="ordered locus">SBO_3323</name>
</gene>
<name>RS12_SHIBS</name>
<reference key="1">
    <citation type="journal article" date="2005" name="Nucleic Acids Res.">
        <title>Genome dynamics and diversity of Shigella species, the etiologic agents of bacillary dysentery.</title>
        <authorList>
            <person name="Yang F."/>
            <person name="Yang J."/>
            <person name="Zhang X."/>
            <person name="Chen L."/>
            <person name="Jiang Y."/>
            <person name="Yan Y."/>
            <person name="Tang X."/>
            <person name="Wang J."/>
            <person name="Xiong Z."/>
            <person name="Dong J."/>
            <person name="Xue Y."/>
            <person name="Zhu Y."/>
            <person name="Xu X."/>
            <person name="Sun L."/>
            <person name="Chen S."/>
            <person name="Nie H."/>
            <person name="Peng J."/>
            <person name="Xu J."/>
            <person name="Wang Y."/>
            <person name="Yuan Z."/>
            <person name="Wen Y."/>
            <person name="Yao Z."/>
            <person name="Shen Y."/>
            <person name="Qiang B."/>
            <person name="Hou Y."/>
            <person name="Yu J."/>
            <person name="Jin Q."/>
        </authorList>
    </citation>
    <scope>NUCLEOTIDE SEQUENCE [LARGE SCALE GENOMIC DNA]</scope>
    <source>
        <strain>Sb227</strain>
    </source>
</reference>
<proteinExistence type="inferred from homology"/>
<protein>
    <recommendedName>
        <fullName evidence="2">Small ribosomal subunit protein uS12</fullName>
    </recommendedName>
    <alternativeName>
        <fullName evidence="3">30S ribosomal protein S12</fullName>
    </alternativeName>
</protein>
<feature type="chain" id="PRO_0000226413" description="Small ribosomal subunit protein uS12">
    <location>
        <begin position="1"/>
        <end position="124"/>
    </location>
</feature>
<feature type="modified residue" description="3-methylthioaspartic acid" evidence="1">
    <location>
        <position position="89"/>
    </location>
</feature>
<feature type="modified residue" description="N6-acetyllysine" evidence="2">
    <location>
        <position position="108"/>
    </location>
</feature>
<accession>Q31VU7</accession>
<evidence type="ECO:0000250" key="1"/>
<evidence type="ECO:0000255" key="2">
    <source>
        <dbReference type="HAMAP-Rule" id="MF_00403"/>
    </source>
</evidence>
<evidence type="ECO:0000305" key="3"/>
<comment type="function">
    <text evidence="2">With S4 and S5 plays an important role in translational accuracy.</text>
</comment>
<comment type="function">
    <text evidence="2">Interacts with and stabilizes bases of the 16S rRNA that are involved in tRNA selection in the A site and with the mRNA backbone. Located at the interface of the 30S and 50S subunits, it traverses the body of the 30S subunit contacting proteins on the other side and probably holding the rRNA structure together. The combined cluster of proteins S8, S12 and S17 appears to hold together the shoulder and platform of the 30S subunit.</text>
</comment>
<comment type="subunit">
    <text evidence="2">Part of the 30S ribosomal subunit. Contacts proteins S8 and S17. May interact with IF1 in the 30S initiation complex.</text>
</comment>
<comment type="similarity">
    <text evidence="2">Belongs to the universal ribosomal protein uS12 family.</text>
</comment>
<keyword id="KW-0007">Acetylation</keyword>
<keyword id="KW-0488">Methylation</keyword>
<keyword id="KW-0687">Ribonucleoprotein</keyword>
<keyword id="KW-0689">Ribosomal protein</keyword>
<keyword id="KW-0694">RNA-binding</keyword>
<keyword id="KW-0699">rRNA-binding</keyword>
<keyword id="KW-0820">tRNA-binding</keyword>
<dbReference type="EMBL" id="CP000036">
    <property type="protein sequence ID" value="ABB67811.1"/>
    <property type="molecule type" value="Genomic_DNA"/>
</dbReference>
<dbReference type="RefSeq" id="WP_000246815.1">
    <property type="nucleotide sequence ID" value="NC_007613.1"/>
</dbReference>
<dbReference type="SMR" id="Q31VU7"/>
<dbReference type="GeneID" id="98390450"/>
<dbReference type="KEGG" id="sbo:SBO_3323"/>
<dbReference type="HOGENOM" id="CLU_104295_1_2_6"/>
<dbReference type="Proteomes" id="UP000007067">
    <property type="component" value="Chromosome"/>
</dbReference>
<dbReference type="GO" id="GO:0015935">
    <property type="term" value="C:small ribosomal subunit"/>
    <property type="evidence" value="ECO:0007669"/>
    <property type="project" value="InterPro"/>
</dbReference>
<dbReference type="GO" id="GO:0019843">
    <property type="term" value="F:rRNA binding"/>
    <property type="evidence" value="ECO:0007669"/>
    <property type="project" value="UniProtKB-UniRule"/>
</dbReference>
<dbReference type="GO" id="GO:0003735">
    <property type="term" value="F:structural constituent of ribosome"/>
    <property type="evidence" value="ECO:0007669"/>
    <property type="project" value="InterPro"/>
</dbReference>
<dbReference type="GO" id="GO:0000049">
    <property type="term" value="F:tRNA binding"/>
    <property type="evidence" value="ECO:0007669"/>
    <property type="project" value="UniProtKB-UniRule"/>
</dbReference>
<dbReference type="GO" id="GO:0006412">
    <property type="term" value="P:translation"/>
    <property type="evidence" value="ECO:0007669"/>
    <property type="project" value="UniProtKB-UniRule"/>
</dbReference>
<dbReference type="CDD" id="cd03368">
    <property type="entry name" value="Ribosomal_S12"/>
    <property type="match status" value="1"/>
</dbReference>
<dbReference type="FunFam" id="2.40.50.140:FF:000001">
    <property type="entry name" value="30S ribosomal protein S12"/>
    <property type="match status" value="1"/>
</dbReference>
<dbReference type="Gene3D" id="2.40.50.140">
    <property type="entry name" value="Nucleic acid-binding proteins"/>
    <property type="match status" value="1"/>
</dbReference>
<dbReference type="HAMAP" id="MF_00403_B">
    <property type="entry name" value="Ribosomal_uS12_B"/>
    <property type="match status" value="1"/>
</dbReference>
<dbReference type="InterPro" id="IPR012340">
    <property type="entry name" value="NA-bd_OB-fold"/>
</dbReference>
<dbReference type="InterPro" id="IPR006032">
    <property type="entry name" value="Ribosomal_uS12"/>
</dbReference>
<dbReference type="InterPro" id="IPR005679">
    <property type="entry name" value="Ribosomal_uS12_bac"/>
</dbReference>
<dbReference type="NCBIfam" id="TIGR00981">
    <property type="entry name" value="rpsL_bact"/>
    <property type="match status" value="1"/>
</dbReference>
<dbReference type="PANTHER" id="PTHR11652">
    <property type="entry name" value="30S RIBOSOMAL PROTEIN S12 FAMILY MEMBER"/>
    <property type="match status" value="1"/>
</dbReference>
<dbReference type="Pfam" id="PF00164">
    <property type="entry name" value="Ribosom_S12_S23"/>
    <property type="match status" value="1"/>
</dbReference>
<dbReference type="PIRSF" id="PIRSF002133">
    <property type="entry name" value="Ribosomal_S12/S23"/>
    <property type="match status" value="1"/>
</dbReference>
<dbReference type="PRINTS" id="PR01034">
    <property type="entry name" value="RIBOSOMALS12"/>
</dbReference>
<dbReference type="SUPFAM" id="SSF50249">
    <property type="entry name" value="Nucleic acid-binding proteins"/>
    <property type="match status" value="1"/>
</dbReference>
<dbReference type="PROSITE" id="PS00055">
    <property type="entry name" value="RIBOSOMAL_S12"/>
    <property type="match status" value="1"/>
</dbReference>
<organism>
    <name type="scientific">Shigella boydii serotype 4 (strain Sb227)</name>
    <dbReference type="NCBI Taxonomy" id="300268"/>
    <lineage>
        <taxon>Bacteria</taxon>
        <taxon>Pseudomonadati</taxon>
        <taxon>Pseudomonadota</taxon>
        <taxon>Gammaproteobacteria</taxon>
        <taxon>Enterobacterales</taxon>
        <taxon>Enterobacteriaceae</taxon>
        <taxon>Shigella</taxon>
    </lineage>
</organism>
<sequence length="124" mass="13737">MATVNQLVRKPRARKVAKSNVPALEACPQKRGVCTRVYTTTPKKPNSALRKVCRVRLTNGFEVTSYIGGEGHNLQEHSVILIRGGRVKDLPGVRYHTVRGALDCSGVKDRKQARSKYGVKRPKA</sequence>